<reference key="1">
    <citation type="journal article" date="2004" name="J. Gen. Virol.">
        <title>Genetic content of wild-type human cytomegalovirus.</title>
        <authorList>
            <person name="Dolan A."/>
            <person name="Cunningham C."/>
            <person name="Hector R.D."/>
            <person name="Hassan-Walker A.F."/>
            <person name="Lee L."/>
            <person name="Addison C."/>
            <person name="Dargan D.J."/>
            <person name="McGeoch D.J."/>
            <person name="Gatherer D."/>
            <person name="Emery V.C."/>
            <person name="Griffiths P.D."/>
            <person name="Sinzger C."/>
            <person name="McSharry B.P."/>
            <person name="Wilkinson G.W.G."/>
            <person name="Davison A.J."/>
        </authorList>
    </citation>
    <scope>NUCLEOTIDE SEQUENCE [LARGE SCALE GENOMIC DNA]</scope>
</reference>
<evidence type="ECO:0000255" key="1"/>
<evidence type="ECO:0000256" key="2">
    <source>
        <dbReference type="SAM" id="MobiDB-lite"/>
    </source>
</evidence>
<evidence type="ECO:0000305" key="3"/>
<accession>F5HB41</accession>
<feature type="chain" id="PRO_0000417854" description="Uncharacterized protein US30">
    <location>
        <begin position="1"/>
        <end position="349"/>
    </location>
</feature>
<feature type="transmembrane region" description="Helical" evidence="1">
    <location>
        <begin position="221"/>
        <end position="241"/>
    </location>
</feature>
<feature type="region of interest" description="Disordered" evidence="2">
    <location>
        <begin position="328"/>
        <end position="349"/>
    </location>
</feature>
<feature type="compositionally biased region" description="Pro residues" evidence="2">
    <location>
        <begin position="328"/>
        <end position="339"/>
    </location>
</feature>
<protein>
    <recommendedName>
        <fullName>Uncharacterized protein US30</fullName>
    </recommendedName>
</protein>
<proteinExistence type="predicted"/>
<comment type="subcellular location">
    <subcellularLocation>
        <location evidence="3">Host membrane</location>
        <topology evidence="3">Single-pass membrane protein</topology>
    </subcellularLocation>
</comment>
<organism>
    <name type="scientific">Human cytomegalovirus (strain Merlin)</name>
    <name type="common">HHV-5</name>
    <name type="synonym">Human herpesvirus 5</name>
    <dbReference type="NCBI Taxonomy" id="295027"/>
    <lineage>
        <taxon>Viruses</taxon>
        <taxon>Duplodnaviria</taxon>
        <taxon>Heunggongvirae</taxon>
        <taxon>Peploviricota</taxon>
        <taxon>Herviviricetes</taxon>
        <taxon>Herpesvirales</taxon>
        <taxon>Orthoherpesviridae</taxon>
        <taxon>Betaherpesvirinae</taxon>
        <taxon>Cytomegalovirus</taxon>
        <taxon>Cytomegalovirus humanbeta5</taxon>
        <taxon>Human cytomegalovirus</taxon>
    </lineage>
</organism>
<sequence>MGNPRSPLDRRLRFRNVPFLPPRIAASSTTTARSLKAKTMEMRFTIAWMWFPSVLLILGLLTPPSNGCTVDVGRNVSIREQCRLRNGATFSKGDIEGNFSGPVVVELDYEDIDITGERQRLRFHLSGLGCPTKENIRKDNESDVNGGIRWALYIQTGDAKYGIRNQHLSIRLMYPGEKNTQQLLGSDFSCERHRRPSTPLGKNAEVPPATRTSSTYGVLSAFVVWIGSGLNIIWWTGIVLLAADALGLGERWLRLALSHRDKHHASRTAALQCQRDMLLRQRRRARRLHAVSEGKLQEEKKRQSALVWNVEARPFPSTHQLIVLPPPVASAPPAVPSQPPEYSSVFPPV</sequence>
<dbReference type="EMBL" id="AY446894">
    <property type="protein sequence ID" value="AAR31718.1"/>
    <property type="molecule type" value="Genomic_DNA"/>
</dbReference>
<dbReference type="RefSeq" id="YP_081614.1">
    <property type="nucleotide sequence ID" value="NC_006273.2"/>
</dbReference>
<dbReference type="DNASU" id="3077526"/>
<dbReference type="GeneID" id="3077526"/>
<dbReference type="KEGG" id="vg:3077526"/>
<dbReference type="Reactome" id="R-HSA-9609690">
    <property type="pathway name" value="HCMV Early Events"/>
</dbReference>
<dbReference type="Proteomes" id="UP000000938">
    <property type="component" value="Segment"/>
</dbReference>
<dbReference type="GO" id="GO:0033644">
    <property type="term" value="C:host cell membrane"/>
    <property type="evidence" value="ECO:0007669"/>
    <property type="project" value="UniProtKB-SubCell"/>
</dbReference>
<dbReference type="GO" id="GO:0016020">
    <property type="term" value="C:membrane"/>
    <property type="evidence" value="ECO:0007669"/>
    <property type="project" value="UniProtKB-KW"/>
</dbReference>
<dbReference type="InterPro" id="IPR035121">
    <property type="entry name" value="US30"/>
</dbReference>
<dbReference type="Pfam" id="PF17624">
    <property type="entry name" value="US30"/>
    <property type="match status" value="1"/>
</dbReference>
<gene>
    <name type="primary">US30</name>
</gene>
<keyword id="KW-1043">Host membrane</keyword>
<keyword id="KW-0472">Membrane</keyword>
<keyword id="KW-1185">Reference proteome</keyword>
<keyword id="KW-0812">Transmembrane</keyword>
<keyword id="KW-1133">Transmembrane helix</keyword>
<name>US30_HCMVM</name>
<organismHost>
    <name type="scientific">Homo sapiens</name>
    <name type="common">Human</name>
    <dbReference type="NCBI Taxonomy" id="9606"/>
</organismHost>